<organism>
    <name type="scientific">Synechococcus elongatus (strain ATCC 33912 / PCC 7942 / FACHB-805)</name>
    <name type="common">Anacystis nidulans R2</name>
    <dbReference type="NCBI Taxonomy" id="1140"/>
    <lineage>
        <taxon>Bacteria</taxon>
        <taxon>Bacillati</taxon>
        <taxon>Cyanobacteriota</taxon>
        <taxon>Cyanophyceae</taxon>
        <taxon>Synechococcales</taxon>
        <taxon>Synechococcaceae</taxon>
        <taxon>Synechococcus</taxon>
    </lineage>
</organism>
<dbReference type="EC" id="4.2.1.126" evidence="1"/>
<dbReference type="EMBL" id="AB003519">
    <property type="protein sequence ID" value="BAA21681.1"/>
    <property type="status" value="ALT_FRAME"/>
    <property type="molecule type" value="Genomic_DNA"/>
</dbReference>
<dbReference type="EMBL" id="CP000100">
    <property type="protein sequence ID" value="ABB58607.1"/>
    <property type="molecule type" value="Genomic_DNA"/>
</dbReference>
<dbReference type="PIR" id="JC5552">
    <property type="entry name" value="JC5552"/>
</dbReference>
<dbReference type="RefSeq" id="WP_011243843.1">
    <property type="nucleotide sequence ID" value="NZ_JACJTX010000002.1"/>
</dbReference>
<dbReference type="SMR" id="O33701"/>
<dbReference type="STRING" id="1140.Synpcc7942_2577"/>
<dbReference type="PaxDb" id="1140-Synpcc7942_2577"/>
<dbReference type="GeneID" id="72431476"/>
<dbReference type="KEGG" id="syf:Synpcc7942_2577"/>
<dbReference type="eggNOG" id="COG2103">
    <property type="taxonomic scope" value="Bacteria"/>
</dbReference>
<dbReference type="HOGENOM" id="CLU_049049_1_1_3"/>
<dbReference type="OrthoDB" id="9813395at2"/>
<dbReference type="BioCyc" id="SYNEL:SYNPCC7942_2577-MONOMER"/>
<dbReference type="UniPathway" id="UPA00342"/>
<dbReference type="Proteomes" id="UP000889800">
    <property type="component" value="Chromosome"/>
</dbReference>
<dbReference type="GO" id="GO:0097367">
    <property type="term" value="F:carbohydrate derivative binding"/>
    <property type="evidence" value="ECO:0007669"/>
    <property type="project" value="InterPro"/>
</dbReference>
<dbReference type="GO" id="GO:0016835">
    <property type="term" value="F:carbon-oxygen lyase activity"/>
    <property type="evidence" value="ECO:0007669"/>
    <property type="project" value="UniProtKB-UniRule"/>
</dbReference>
<dbReference type="GO" id="GO:0016803">
    <property type="term" value="F:ether hydrolase activity"/>
    <property type="evidence" value="ECO:0007669"/>
    <property type="project" value="TreeGrafter"/>
</dbReference>
<dbReference type="GO" id="GO:0046348">
    <property type="term" value="P:amino sugar catabolic process"/>
    <property type="evidence" value="ECO:0007669"/>
    <property type="project" value="InterPro"/>
</dbReference>
<dbReference type="GO" id="GO:0097173">
    <property type="term" value="P:N-acetylmuramic acid catabolic process"/>
    <property type="evidence" value="ECO:0007669"/>
    <property type="project" value="UniProtKB-UniPathway"/>
</dbReference>
<dbReference type="GO" id="GO:0009254">
    <property type="term" value="P:peptidoglycan turnover"/>
    <property type="evidence" value="ECO:0007669"/>
    <property type="project" value="TreeGrafter"/>
</dbReference>
<dbReference type="CDD" id="cd05007">
    <property type="entry name" value="SIS_Etherase"/>
    <property type="match status" value="1"/>
</dbReference>
<dbReference type="FunFam" id="3.40.50.10490:FF:000014">
    <property type="entry name" value="N-acetylmuramic acid 6-phosphate etherase"/>
    <property type="match status" value="1"/>
</dbReference>
<dbReference type="Gene3D" id="1.10.8.1080">
    <property type="match status" value="1"/>
</dbReference>
<dbReference type="Gene3D" id="3.40.50.10490">
    <property type="entry name" value="Glucose-6-phosphate isomerase like protein, domain 1"/>
    <property type="match status" value="2"/>
</dbReference>
<dbReference type="HAMAP" id="MF_00068">
    <property type="entry name" value="MurQ"/>
    <property type="match status" value="1"/>
</dbReference>
<dbReference type="InterPro" id="IPR005488">
    <property type="entry name" value="Etherase_MurQ"/>
</dbReference>
<dbReference type="InterPro" id="IPR005486">
    <property type="entry name" value="Glucokinase_regulatory_CS"/>
</dbReference>
<dbReference type="InterPro" id="IPR040190">
    <property type="entry name" value="MURQ/GCKR"/>
</dbReference>
<dbReference type="InterPro" id="IPR001347">
    <property type="entry name" value="SIS_dom"/>
</dbReference>
<dbReference type="InterPro" id="IPR046348">
    <property type="entry name" value="SIS_dom_sf"/>
</dbReference>
<dbReference type="NCBIfam" id="TIGR00274">
    <property type="entry name" value="N-acetylmuramic acid 6-phosphate etherase"/>
    <property type="match status" value="1"/>
</dbReference>
<dbReference type="NCBIfam" id="NF003915">
    <property type="entry name" value="PRK05441.1"/>
    <property type="match status" value="1"/>
</dbReference>
<dbReference type="NCBIfam" id="NF009222">
    <property type="entry name" value="PRK12570.1"/>
    <property type="match status" value="1"/>
</dbReference>
<dbReference type="PANTHER" id="PTHR10088">
    <property type="entry name" value="GLUCOKINASE REGULATORY PROTEIN"/>
    <property type="match status" value="1"/>
</dbReference>
<dbReference type="PANTHER" id="PTHR10088:SF4">
    <property type="entry name" value="GLUCOKINASE REGULATORY PROTEIN"/>
    <property type="match status" value="1"/>
</dbReference>
<dbReference type="Pfam" id="PF22645">
    <property type="entry name" value="GKRP_SIS_N"/>
    <property type="match status" value="1"/>
</dbReference>
<dbReference type="SUPFAM" id="SSF53697">
    <property type="entry name" value="SIS domain"/>
    <property type="match status" value="1"/>
</dbReference>
<dbReference type="PROSITE" id="PS01272">
    <property type="entry name" value="GCKR"/>
    <property type="match status" value="1"/>
</dbReference>
<dbReference type="PROSITE" id="PS51464">
    <property type="entry name" value="SIS"/>
    <property type="match status" value="1"/>
</dbReference>
<name>MURQ_SYNE7</name>
<proteinExistence type="inferred from homology"/>
<reference key="1">
    <citation type="journal article" date="1997" name="Biochem. Biophys. Res. Commun.">
        <title>Sequence and analysis of a dnaJ homologue gene in cyanobacterium Synechococcus sp. PCC7942.</title>
        <authorList>
            <person name="Oguchi K."/>
            <person name="Nimura K."/>
            <person name="Yoshikawa H."/>
            <person name="Takahashi H."/>
        </authorList>
    </citation>
    <scope>NUCLEOTIDE SEQUENCE [GENOMIC DNA]</scope>
</reference>
<reference key="2">
    <citation type="submission" date="2005-08" db="EMBL/GenBank/DDBJ databases">
        <title>Complete sequence of chromosome 1 of Synechococcus elongatus PCC 7942.</title>
        <authorList>
            <consortium name="US DOE Joint Genome Institute"/>
            <person name="Copeland A."/>
            <person name="Lucas S."/>
            <person name="Lapidus A."/>
            <person name="Barry K."/>
            <person name="Detter J.C."/>
            <person name="Glavina T."/>
            <person name="Hammon N."/>
            <person name="Israni S."/>
            <person name="Pitluck S."/>
            <person name="Schmutz J."/>
            <person name="Larimer F."/>
            <person name="Land M."/>
            <person name="Kyrpides N."/>
            <person name="Lykidis A."/>
            <person name="Golden S."/>
            <person name="Richardson P."/>
        </authorList>
    </citation>
    <scope>NUCLEOTIDE SEQUENCE [LARGE SCALE GENOMIC DNA]</scope>
    <source>
        <strain>ATCC 33912 / PCC 7942 / FACHB-805</strain>
    </source>
</reference>
<protein>
    <recommendedName>
        <fullName evidence="1">N-acetylmuramic acid 6-phosphate etherase</fullName>
        <shortName evidence="1">MurNAc-6-P etherase</shortName>
        <ecNumber evidence="1">4.2.1.126</ecNumber>
    </recommendedName>
    <alternativeName>
        <fullName evidence="1">N-acetylmuramic acid 6-phosphate hydrolase</fullName>
    </alternativeName>
    <alternativeName>
        <fullName evidence="1">N-acetylmuramic acid 6-phosphate lyase</fullName>
    </alternativeName>
</protein>
<feature type="chain" id="PRO_0000214838" description="N-acetylmuramic acid 6-phosphate etherase">
    <location>
        <begin position="1"/>
        <end position="307"/>
    </location>
</feature>
<feature type="domain" description="SIS" evidence="1">
    <location>
        <begin position="60"/>
        <end position="223"/>
    </location>
</feature>
<feature type="active site" description="Proton donor" evidence="1">
    <location>
        <position position="88"/>
    </location>
</feature>
<feature type="active site" evidence="1">
    <location>
        <position position="119"/>
    </location>
</feature>
<evidence type="ECO:0000255" key="1">
    <source>
        <dbReference type="HAMAP-Rule" id="MF_00068"/>
    </source>
</evidence>
<evidence type="ECO:0000305" key="2"/>
<gene>
    <name evidence="1" type="primary">murQ</name>
    <name type="ordered locus">Synpcc7942_2577</name>
</gene>
<comment type="function">
    <text evidence="1">Specifically catalyzes the cleavage of the D-lactyl ether substituent of MurNAc 6-phosphate, producing GlcNAc 6-phosphate and D-lactate.</text>
</comment>
<comment type="catalytic activity">
    <reaction evidence="1">
        <text>N-acetyl-D-muramate 6-phosphate + H2O = N-acetyl-D-glucosamine 6-phosphate + (R)-lactate</text>
        <dbReference type="Rhea" id="RHEA:26410"/>
        <dbReference type="ChEBI" id="CHEBI:15377"/>
        <dbReference type="ChEBI" id="CHEBI:16004"/>
        <dbReference type="ChEBI" id="CHEBI:57513"/>
        <dbReference type="ChEBI" id="CHEBI:58722"/>
        <dbReference type="EC" id="4.2.1.126"/>
    </reaction>
</comment>
<comment type="pathway">
    <text evidence="1">Amino-sugar metabolism; N-acetylmuramate degradation.</text>
</comment>
<comment type="subunit">
    <text evidence="1">Homodimer.</text>
</comment>
<comment type="miscellaneous">
    <text evidence="1">A lyase-type mechanism (elimination/hydration) is suggested for the cleavage of the lactyl ether bond of MurNAc 6-phosphate, with the formation of an alpha,beta-unsaturated aldehyde intermediate with (E)-stereochemistry, followed by the syn addition of water to give product.</text>
</comment>
<comment type="similarity">
    <text evidence="1">Belongs to the GCKR-like family. MurNAc-6-P etherase subfamily.</text>
</comment>
<comment type="sequence caution" evidence="2">
    <conflict type="frameshift">
        <sequence resource="EMBL-CDS" id="BAA21681"/>
    </conflict>
</comment>
<keyword id="KW-0119">Carbohydrate metabolism</keyword>
<keyword id="KW-0456">Lyase</keyword>
<keyword id="KW-1185">Reference proteome</keyword>
<accession>O33701</accession>
<accession>Q31K12</accession>
<sequence length="307" mass="32231">MDPSLSDRGHLLTEQANPASQALDQLSPLELVDLFNQEDQHCLAAVAQAREAIAQAIEYAAQAIARGGRLFYIGAGTSGRLGVLDAAECPPTFCSDPEQVQGILAGGSAAMFRSSEGLEDRAEDGAVAIAEYQIGPRDFILGITAGGTTPYVHGALEAARSAGAKTGFLACVPADQVAIAVDVDIRVPVGPEILAGSTRLKAGTVTKMVLNQISTGAMVRIGKVYGNRMVDVAVTNRKLEDRALRILSDLLSIDRQQAAALLGANERSVKQALLQHWTGLEPAEAAALLTEHQGHLRAAVTAFSSLR</sequence>